<keyword id="KW-1003">Cell membrane</keyword>
<keyword id="KW-0186">Copper</keyword>
<keyword id="KW-0249">Electron transport</keyword>
<keyword id="KW-0349">Heme</keyword>
<keyword id="KW-0408">Iron</keyword>
<keyword id="KW-0472">Membrane</keyword>
<keyword id="KW-0479">Metal-binding</keyword>
<keyword id="KW-0679">Respiratory chain</keyword>
<keyword id="KW-1278">Translocase</keyword>
<keyword id="KW-0812">Transmembrane</keyword>
<keyword id="KW-1133">Transmembrane helix</keyword>
<keyword id="KW-0813">Transport</keyword>
<accession>Q4ULU3</accession>
<gene>
    <name type="primary">ctaC</name>
    <name type="synonym">coxB</name>
    <name type="ordered locus">RF_0629</name>
</gene>
<protein>
    <recommendedName>
        <fullName>Probable cytochrome c oxidase subunit 2</fullName>
        <ecNumber>7.1.1.9</ecNumber>
    </recommendedName>
    <alternativeName>
        <fullName>Cytochrome aa3 subunit 2</fullName>
    </alternativeName>
    <alternativeName>
        <fullName>Cytochrome c oxidase polypeptide II</fullName>
    </alternativeName>
</protein>
<name>COX2_RICFE</name>
<evidence type="ECO:0000250" key="1"/>
<evidence type="ECO:0000255" key="2"/>
<evidence type="ECO:0000305" key="3"/>
<sequence>MKNIIRHLSKPAYREEFKGDTSPRTAAYISNRADASLGSTYKLPLEAKFWKMSIALICFLIVSSNCFASEPLPWQVTFQPPASPIMEELHHFHNFLLYISTAIVLFVAGLLGFVCIRFNAKNNPVPAKFSHNVLIEIIWTVIPIIILVIIAVPSFRILRHAEKIPETDLTIKVVGYQWYWHYIYPDHDNLEFDSVMISDENLKPDQKRLLDVDNRIVIPENATVRFLITAGDVIHSFAVPSLGFKIDAVPGRINETWTRVAKKGVYYGQCSELCGINHGFMPIAIEVVSKEDFDNWIASKNKTAMNGKNPKLAAN</sequence>
<comment type="function">
    <text evidence="1">Subunits I and II form the functional core of the enzyme complex. Electrons originating in cytochrome c are transferred via heme a and Cu(A) to the binuclear center formed by heme a3 and Cu(B) (By similarity).</text>
</comment>
<comment type="catalytic activity">
    <reaction>
        <text>4 Fe(II)-[cytochrome c] + O2 + 8 H(+)(in) = 4 Fe(III)-[cytochrome c] + 2 H2O + 4 H(+)(out)</text>
        <dbReference type="Rhea" id="RHEA:11436"/>
        <dbReference type="Rhea" id="RHEA-COMP:10350"/>
        <dbReference type="Rhea" id="RHEA-COMP:14399"/>
        <dbReference type="ChEBI" id="CHEBI:15377"/>
        <dbReference type="ChEBI" id="CHEBI:15378"/>
        <dbReference type="ChEBI" id="CHEBI:15379"/>
        <dbReference type="ChEBI" id="CHEBI:29033"/>
        <dbReference type="ChEBI" id="CHEBI:29034"/>
        <dbReference type="EC" id="7.1.1.9"/>
    </reaction>
</comment>
<comment type="cofactor">
    <cofactor evidence="1">
        <name>Cu cation</name>
        <dbReference type="ChEBI" id="CHEBI:23378"/>
    </cofactor>
    <text evidence="1">Binds a copper A center.</text>
</comment>
<comment type="cofactor">
    <cofactor evidence="1">
        <name>heme</name>
        <dbReference type="ChEBI" id="CHEBI:30413"/>
    </cofactor>
</comment>
<comment type="subcellular location">
    <subcellularLocation>
        <location evidence="3">Cell membrane</location>
        <topology evidence="3">Multi-pass membrane protein</topology>
    </subcellularLocation>
</comment>
<comment type="similarity">
    <text evidence="3">Belongs to the cytochrome c oxidase subunit 2 family.</text>
</comment>
<dbReference type="EC" id="7.1.1.9"/>
<dbReference type="EMBL" id="CP000053">
    <property type="protein sequence ID" value="AAY61480.1"/>
    <property type="molecule type" value="Genomic_DNA"/>
</dbReference>
<dbReference type="SMR" id="Q4ULU3"/>
<dbReference type="STRING" id="315456.RF_0629"/>
<dbReference type="KEGG" id="rfe:RF_0629"/>
<dbReference type="eggNOG" id="COG1565">
    <property type="taxonomic scope" value="Bacteria"/>
</dbReference>
<dbReference type="eggNOG" id="COG1622">
    <property type="taxonomic scope" value="Bacteria"/>
</dbReference>
<dbReference type="HOGENOM" id="CLU_036876_2_0_5"/>
<dbReference type="OrthoDB" id="9781261at2"/>
<dbReference type="Proteomes" id="UP000008548">
    <property type="component" value="Chromosome"/>
</dbReference>
<dbReference type="GO" id="GO:0005886">
    <property type="term" value="C:plasma membrane"/>
    <property type="evidence" value="ECO:0007669"/>
    <property type="project" value="UniProtKB-SubCell"/>
</dbReference>
<dbReference type="GO" id="GO:0005507">
    <property type="term" value="F:copper ion binding"/>
    <property type="evidence" value="ECO:0007669"/>
    <property type="project" value="InterPro"/>
</dbReference>
<dbReference type="GO" id="GO:0004129">
    <property type="term" value="F:cytochrome-c oxidase activity"/>
    <property type="evidence" value="ECO:0007669"/>
    <property type="project" value="UniProtKB-EC"/>
</dbReference>
<dbReference type="GO" id="GO:0042773">
    <property type="term" value="P:ATP synthesis coupled electron transport"/>
    <property type="evidence" value="ECO:0007669"/>
    <property type="project" value="TreeGrafter"/>
</dbReference>
<dbReference type="CDD" id="cd13912">
    <property type="entry name" value="CcO_II_C"/>
    <property type="match status" value="1"/>
</dbReference>
<dbReference type="FunFam" id="2.60.40.420:FF:000001">
    <property type="entry name" value="Cytochrome c oxidase subunit 2"/>
    <property type="match status" value="1"/>
</dbReference>
<dbReference type="Gene3D" id="1.10.287.90">
    <property type="match status" value="1"/>
</dbReference>
<dbReference type="Gene3D" id="2.60.40.420">
    <property type="entry name" value="Cupredoxins - blue copper proteins"/>
    <property type="match status" value="1"/>
</dbReference>
<dbReference type="InterPro" id="IPR045187">
    <property type="entry name" value="CcO_II"/>
</dbReference>
<dbReference type="InterPro" id="IPR002429">
    <property type="entry name" value="CcO_II-like_C"/>
</dbReference>
<dbReference type="InterPro" id="IPR034210">
    <property type="entry name" value="CcO_II_C"/>
</dbReference>
<dbReference type="InterPro" id="IPR001505">
    <property type="entry name" value="Copper_CuA"/>
</dbReference>
<dbReference type="InterPro" id="IPR008972">
    <property type="entry name" value="Cupredoxin"/>
</dbReference>
<dbReference type="InterPro" id="IPR014222">
    <property type="entry name" value="Cyt_c_oxidase_su2"/>
</dbReference>
<dbReference type="InterPro" id="IPR011759">
    <property type="entry name" value="Cyt_c_oxidase_su2_TM_dom"/>
</dbReference>
<dbReference type="InterPro" id="IPR036257">
    <property type="entry name" value="Cyt_c_oxidase_su2_TM_sf"/>
</dbReference>
<dbReference type="InterPro" id="IPR005728">
    <property type="entry name" value="RPE1"/>
</dbReference>
<dbReference type="NCBIfam" id="TIGR02866">
    <property type="entry name" value="CoxB"/>
    <property type="match status" value="1"/>
</dbReference>
<dbReference type="NCBIfam" id="TIGR01045">
    <property type="entry name" value="RPE1"/>
    <property type="match status" value="1"/>
</dbReference>
<dbReference type="PANTHER" id="PTHR22888:SF9">
    <property type="entry name" value="CYTOCHROME C OXIDASE SUBUNIT 2"/>
    <property type="match status" value="1"/>
</dbReference>
<dbReference type="PANTHER" id="PTHR22888">
    <property type="entry name" value="CYTOCHROME C OXIDASE, SUBUNIT II"/>
    <property type="match status" value="1"/>
</dbReference>
<dbReference type="Pfam" id="PF00116">
    <property type="entry name" value="COX2"/>
    <property type="match status" value="1"/>
</dbReference>
<dbReference type="Pfam" id="PF02790">
    <property type="entry name" value="COX2_TM"/>
    <property type="match status" value="1"/>
</dbReference>
<dbReference type="PRINTS" id="PR01166">
    <property type="entry name" value="CYCOXIDASEII"/>
</dbReference>
<dbReference type="SUPFAM" id="SSF49503">
    <property type="entry name" value="Cupredoxins"/>
    <property type="match status" value="1"/>
</dbReference>
<dbReference type="SUPFAM" id="SSF81464">
    <property type="entry name" value="Cytochrome c oxidase subunit II-like, transmembrane region"/>
    <property type="match status" value="1"/>
</dbReference>
<dbReference type="PROSITE" id="PS00078">
    <property type="entry name" value="COX2"/>
    <property type="match status" value="1"/>
</dbReference>
<dbReference type="PROSITE" id="PS50857">
    <property type="entry name" value="COX2_CUA"/>
    <property type="match status" value="1"/>
</dbReference>
<dbReference type="PROSITE" id="PS50999">
    <property type="entry name" value="COX2_TM"/>
    <property type="match status" value="1"/>
</dbReference>
<reference key="1">
    <citation type="journal article" date="2005" name="PLoS Biol.">
        <title>The genome sequence of Rickettsia felis identifies the first putative conjugative plasmid in an obligate intracellular parasite.</title>
        <authorList>
            <person name="Ogata H."/>
            <person name="Renesto P."/>
            <person name="Audic S."/>
            <person name="Robert C."/>
            <person name="Blanc G."/>
            <person name="Fournier P.-E."/>
            <person name="Parinello H."/>
            <person name="Claverie J.-M."/>
            <person name="Raoult D."/>
        </authorList>
    </citation>
    <scope>NUCLEOTIDE SEQUENCE [LARGE SCALE GENOMIC DNA]</scope>
    <source>
        <strain>ATCC VR-1525 / URRWXCal2</strain>
    </source>
</reference>
<proteinExistence type="inferred from homology"/>
<organism>
    <name type="scientific">Rickettsia felis (strain ATCC VR-1525 / URRWXCal2)</name>
    <name type="common">Rickettsia azadi</name>
    <dbReference type="NCBI Taxonomy" id="315456"/>
    <lineage>
        <taxon>Bacteria</taxon>
        <taxon>Pseudomonadati</taxon>
        <taxon>Pseudomonadota</taxon>
        <taxon>Alphaproteobacteria</taxon>
        <taxon>Rickettsiales</taxon>
        <taxon>Rickettsiaceae</taxon>
        <taxon>Rickettsieae</taxon>
        <taxon>Rickettsia</taxon>
        <taxon>spotted fever group</taxon>
    </lineage>
</organism>
<feature type="chain" id="PRO_0000280887" description="Probable cytochrome c oxidase subunit 2">
    <location>
        <begin position="1"/>
        <end position="315"/>
    </location>
</feature>
<feature type="transmembrane region" description="Helical" evidence="2">
    <location>
        <begin position="41"/>
        <end position="61"/>
    </location>
</feature>
<feature type="transmembrane region" description="Helical" evidence="2">
    <location>
        <begin position="96"/>
        <end position="116"/>
    </location>
</feature>
<feature type="transmembrane region" description="Helical" evidence="2">
    <location>
        <begin position="133"/>
        <end position="153"/>
    </location>
</feature>
<feature type="domain" description="RPE1 insert">
    <location>
        <begin position="6"/>
        <end position="53"/>
    </location>
</feature>
<feature type="binding site" evidence="2">
    <location>
        <position position="235"/>
    </location>
    <ligand>
        <name>Cu cation</name>
        <dbReference type="ChEBI" id="CHEBI:23378"/>
        <label>A</label>
    </ligand>
</feature>
<feature type="binding site" evidence="2">
    <location>
        <position position="270"/>
    </location>
    <ligand>
        <name>Cu cation</name>
        <dbReference type="ChEBI" id="CHEBI:23378"/>
        <label>A</label>
    </ligand>
</feature>
<feature type="binding site" evidence="2">
    <location>
        <position position="274"/>
    </location>
    <ligand>
        <name>Cu cation</name>
        <dbReference type="ChEBI" id="CHEBI:23378"/>
        <label>A</label>
    </ligand>
</feature>
<feature type="binding site" evidence="2">
    <location>
        <position position="278"/>
    </location>
    <ligand>
        <name>Cu cation</name>
        <dbReference type="ChEBI" id="CHEBI:23378"/>
        <label>A</label>
    </ligand>
</feature>